<dbReference type="EC" id="1.2.1.41" evidence="1"/>
<dbReference type="EMBL" id="AM920689">
    <property type="protein sequence ID" value="CAP51294.1"/>
    <property type="molecule type" value="Genomic_DNA"/>
</dbReference>
<dbReference type="SMR" id="B0RS59"/>
<dbReference type="KEGG" id="xca:xcc-b100_1941"/>
<dbReference type="HOGENOM" id="CLU_030231_0_0_6"/>
<dbReference type="UniPathway" id="UPA00098">
    <property type="reaction ID" value="UER00360"/>
</dbReference>
<dbReference type="Proteomes" id="UP000001188">
    <property type="component" value="Chromosome"/>
</dbReference>
<dbReference type="GO" id="GO:0005737">
    <property type="term" value="C:cytoplasm"/>
    <property type="evidence" value="ECO:0007669"/>
    <property type="project" value="UniProtKB-SubCell"/>
</dbReference>
<dbReference type="GO" id="GO:0004350">
    <property type="term" value="F:glutamate-5-semialdehyde dehydrogenase activity"/>
    <property type="evidence" value="ECO:0007669"/>
    <property type="project" value="UniProtKB-UniRule"/>
</dbReference>
<dbReference type="GO" id="GO:0050661">
    <property type="term" value="F:NADP binding"/>
    <property type="evidence" value="ECO:0007669"/>
    <property type="project" value="InterPro"/>
</dbReference>
<dbReference type="GO" id="GO:0055129">
    <property type="term" value="P:L-proline biosynthetic process"/>
    <property type="evidence" value="ECO:0007669"/>
    <property type="project" value="UniProtKB-UniRule"/>
</dbReference>
<dbReference type="CDD" id="cd07079">
    <property type="entry name" value="ALDH_F18-19_ProA-GPR"/>
    <property type="match status" value="1"/>
</dbReference>
<dbReference type="FunFam" id="3.40.309.10:FF:000006">
    <property type="entry name" value="Gamma-glutamyl phosphate reductase"/>
    <property type="match status" value="1"/>
</dbReference>
<dbReference type="Gene3D" id="3.40.605.10">
    <property type="entry name" value="Aldehyde Dehydrogenase, Chain A, domain 1"/>
    <property type="match status" value="1"/>
</dbReference>
<dbReference type="Gene3D" id="3.40.309.10">
    <property type="entry name" value="Aldehyde Dehydrogenase, Chain A, domain 2"/>
    <property type="match status" value="1"/>
</dbReference>
<dbReference type="HAMAP" id="MF_00412">
    <property type="entry name" value="ProA"/>
    <property type="match status" value="1"/>
</dbReference>
<dbReference type="InterPro" id="IPR016161">
    <property type="entry name" value="Ald_DH/histidinol_DH"/>
</dbReference>
<dbReference type="InterPro" id="IPR016163">
    <property type="entry name" value="Ald_DH_C"/>
</dbReference>
<dbReference type="InterPro" id="IPR016162">
    <property type="entry name" value="Ald_DH_N"/>
</dbReference>
<dbReference type="InterPro" id="IPR015590">
    <property type="entry name" value="Aldehyde_DH_dom"/>
</dbReference>
<dbReference type="InterPro" id="IPR020593">
    <property type="entry name" value="G-glutamylP_reductase_CS"/>
</dbReference>
<dbReference type="InterPro" id="IPR012134">
    <property type="entry name" value="Glu-5-SA_DH"/>
</dbReference>
<dbReference type="InterPro" id="IPR000965">
    <property type="entry name" value="GPR_dom"/>
</dbReference>
<dbReference type="NCBIfam" id="NF001221">
    <property type="entry name" value="PRK00197.1"/>
    <property type="match status" value="1"/>
</dbReference>
<dbReference type="NCBIfam" id="TIGR00407">
    <property type="entry name" value="proA"/>
    <property type="match status" value="1"/>
</dbReference>
<dbReference type="PANTHER" id="PTHR11063:SF8">
    <property type="entry name" value="DELTA-1-PYRROLINE-5-CARBOXYLATE SYNTHASE"/>
    <property type="match status" value="1"/>
</dbReference>
<dbReference type="PANTHER" id="PTHR11063">
    <property type="entry name" value="GLUTAMATE SEMIALDEHYDE DEHYDROGENASE"/>
    <property type="match status" value="1"/>
</dbReference>
<dbReference type="Pfam" id="PF00171">
    <property type="entry name" value="Aldedh"/>
    <property type="match status" value="1"/>
</dbReference>
<dbReference type="PIRSF" id="PIRSF000151">
    <property type="entry name" value="GPR"/>
    <property type="match status" value="1"/>
</dbReference>
<dbReference type="SUPFAM" id="SSF53720">
    <property type="entry name" value="ALDH-like"/>
    <property type="match status" value="1"/>
</dbReference>
<dbReference type="PROSITE" id="PS01223">
    <property type="entry name" value="PROA"/>
    <property type="match status" value="1"/>
</dbReference>
<keyword id="KW-0028">Amino-acid biosynthesis</keyword>
<keyword id="KW-0963">Cytoplasm</keyword>
<keyword id="KW-0521">NADP</keyword>
<keyword id="KW-0560">Oxidoreductase</keyword>
<keyword id="KW-0641">Proline biosynthesis</keyword>
<feature type="chain" id="PRO_1000193675" description="Gamma-glutamyl phosphate reductase">
    <location>
        <begin position="1"/>
        <end position="414"/>
    </location>
</feature>
<sequence length="414" mass="44171">MTIKTLALQCRDAAHVLSQLSSSAKQALLEAMAAALEHDGAVILAANARDLEAAREKGVGTAMLDRLALDTKRLDGIAAALREVAQLPDPVGQITREDVRPNGIVVQKVRVPLGVIAMIYEARPNVTADAAALCIKAGNGVILRGGSEAIHSNTAIARALQSALREANVPEAALTLVEDLRRETMLELLQLSDIVDLAIPRGGEGLIRFVAEHARVPVIKHYKGVCHLFVDASADVDLAVRLLVDGKASRPSACNSLETLLVHADIAERFLPAAAHALRERHVELRGDAATRALLPDIAAASDEDYAAEFLDLILAIRVVPDLDTALTHIRQYGSDHTEVIATQDTANAEQFVQSLRSAVVMVNASSRFSDGGELGLGAEIGISTTRLHSYGPMGLEALTVERFVVRGEGQVRH</sequence>
<comment type="function">
    <text evidence="1">Catalyzes the NADPH-dependent reduction of L-glutamate 5-phosphate into L-glutamate 5-semialdehyde and phosphate. The product spontaneously undergoes cyclization to form 1-pyrroline-5-carboxylate.</text>
</comment>
<comment type="catalytic activity">
    <reaction evidence="1">
        <text>L-glutamate 5-semialdehyde + phosphate + NADP(+) = L-glutamyl 5-phosphate + NADPH + H(+)</text>
        <dbReference type="Rhea" id="RHEA:19541"/>
        <dbReference type="ChEBI" id="CHEBI:15378"/>
        <dbReference type="ChEBI" id="CHEBI:43474"/>
        <dbReference type="ChEBI" id="CHEBI:57783"/>
        <dbReference type="ChEBI" id="CHEBI:58066"/>
        <dbReference type="ChEBI" id="CHEBI:58274"/>
        <dbReference type="ChEBI" id="CHEBI:58349"/>
        <dbReference type="EC" id="1.2.1.41"/>
    </reaction>
</comment>
<comment type="pathway">
    <text evidence="1">Amino-acid biosynthesis; L-proline biosynthesis; L-glutamate 5-semialdehyde from L-glutamate: step 2/2.</text>
</comment>
<comment type="subcellular location">
    <subcellularLocation>
        <location evidence="1">Cytoplasm</location>
    </subcellularLocation>
</comment>
<comment type="similarity">
    <text evidence="1">Belongs to the gamma-glutamyl phosphate reductase family.</text>
</comment>
<gene>
    <name evidence="1" type="primary">proA</name>
    <name type="ordered locus">xcc-b100_1941</name>
</gene>
<name>PROA_XANCB</name>
<protein>
    <recommendedName>
        <fullName evidence="1">Gamma-glutamyl phosphate reductase</fullName>
        <shortName evidence="1">GPR</shortName>
        <ecNumber evidence="1">1.2.1.41</ecNumber>
    </recommendedName>
    <alternativeName>
        <fullName evidence="1">Glutamate-5-semialdehyde dehydrogenase</fullName>
    </alternativeName>
    <alternativeName>
        <fullName evidence="1">Glutamyl-gamma-semialdehyde dehydrogenase</fullName>
        <shortName evidence="1">GSA dehydrogenase</shortName>
    </alternativeName>
</protein>
<evidence type="ECO:0000255" key="1">
    <source>
        <dbReference type="HAMAP-Rule" id="MF_00412"/>
    </source>
</evidence>
<proteinExistence type="inferred from homology"/>
<organism>
    <name type="scientific">Xanthomonas campestris pv. campestris (strain B100)</name>
    <dbReference type="NCBI Taxonomy" id="509169"/>
    <lineage>
        <taxon>Bacteria</taxon>
        <taxon>Pseudomonadati</taxon>
        <taxon>Pseudomonadota</taxon>
        <taxon>Gammaproteobacteria</taxon>
        <taxon>Lysobacterales</taxon>
        <taxon>Lysobacteraceae</taxon>
        <taxon>Xanthomonas</taxon>
    </lineage>
</organism>
<reference key="1">
    <citation type="journal article" date="2008" name="J. Biotechnol.">
        <title>The genome of Xanthomonas campestris pv. campestris B100 and its use for the reconstruction of metabolic pathways involved in xanthan biosynthesis.</title>
        <authorList>
            <person name="Vorhoelter F.-J."/>
            <person name="Schneiker S."/>
            <person name="Goesmann A."/>
            <person name="Krause L."/>
            <person name="Bekel T."/>
            <person name="Kaiser O."/>
            <person name="Linke B."/>
            <person name="Patschkowski T."/>
            <person name="Rueckert C."/>
            <person name="Schmid J."/>
            <person name="Sidhu V.K."/>
            <person name="Sieber V."/>
            <person name="Tauch A."/>
            <person name="Watt S.A."/>
            <person name="Weisshaar B."/>
            <person name="Becker A."/>
            <person name="Niehaus K."/>
            <person name="Puehler A."/>
        </authorList>
    </citation>
    <scope>NUCLEOTIDE SEQUENCE [LARGE SCALE GENOMIC DNA]</scope>
    <source>
        <strain>B100</strain>
    </source>
</reference>
<accession>B0RS59</accession>